<keyword id="KW-0067">ATP-binding</keyword>
<keyword id="KW-0150">Chloroplast</keyword>
<keyword id="KW-0275">Fatty acid biosynthesis</keyword>
<keyword id="KW-0276">Fatty acid metabolism</keyword>
<keyword id="KW-0444">Lipid biosynthesis</keyword>
<keyword id="KW-0443">Lipid metabolism</keyword>
<keyword id="KW-0479">Metal-binding</keyword>
<keyword id="KW-0547">Nucleotide-binding</keyword>
<keyword id="KW-0934">Plastid</keyword>
<keyword id="KW-0808">Transferase</keyword>
<keyword id="KW-0862">Zinc</keyword>
<keyword id="KW-0863">Zinc-finger</keyword>
<name>ACCD_NUPAD</name>
<organism>
    <name type="scientific">Nuphar advena</name>
    <name type="common">Common spatterdock</name>
    <name type="synonym">Nuphar lutea subsp. advena</name>
    <dbReference type="NCBI Taxonomy" id="77108"/>
    <lineage>
        <taxon>Eukaryota</taxon>
        <taxon>Viridiplantae</taxon>
        <taxon>Streptophyta</taxon>
        <taxon>Embryophyta</taxon>
        <taxon>Tracheophyta</taxon>
        <taxon>Spermatophyta</taxon>
        <taxon>Magnoliopsida</taxon>
        <taxon>Nymphaeales</taxon>
        <taxon>Nymphaeaceae</taxon>
        <taxon>Nuphar</taxon>
    </lineage>
</organism>
<protein>
    <recommendedName>
        <fullName evidence="2">Acetyl-coenzyme A carboxylase carboxyl transferase subunit beta, chloroplastic</fullName>
        <shortName evidence="2">ACCase subunit beta</shortName>
        <shortName evidence="2">Acetyl-CoA carboxylase carboxyltransferase subunit beta</shortName>
        <ecNumber evidence="2">2.1.3.15</ecNumber>
    </recommendedName>
</protein>
<reference key="1">
    <citation type="journal article" date="2007" name="BMC Genomics">
        <title>Comparative chloroplast genomics: analyses including new sequences from the angiosperms Nuphar advena and Ranunculus macranthus.</title>
        <authorList>
            <person name="Raubeson L.A."/>
            <person name="Peery R."/>
            <person name="Chumley T.W."/>
            <person name="Dziubek C."/>
            <person name="Fourcade H.M."/>
            <person name="Boore J.L."/>
            <person name="Jansen R.K."/>
        </authorList>
    </citation>
    <scope>NUCLEOTIDE SEQUENCE [LARGE SCALE GENOMIC DNA]</scope>
</reference>
<comment type="function">
    <text evidence="2">Component of the acetyl coenzyme A carboxylase (ACC) complex. Biotin carboxylase (BC) catalyzes the carboxylation of biotin on its carrier protein (BCCP) and then the CO(2) group is transferred by the transcarboxylase to acetyl-CoA to form malonyl-CoA.</text>
</comment>
<comment type="catalytic activity">
    <reaction evidence="2">
        <text>N(6)-carboxybiotinyl-L-lysyl-[protein] + acetyl-CoA = N(6)-biotinyl-L-lysyl-[protein] + malonyl-CoA</text>
        <dbReference type="Rhea" id="RHEA:54728"/>
        <dbReference type="Rhea" id="RHEA-COMP:10505"/>
        <dbReference type="Rhea" id="RHEA-COMP:10506"/>
        <dbReference type="ChEBI" id="CHEBI:57288"/>
        <dbReference type="ChEBI" id="CHEBI:57384"/>
        <dbReference type="ChEBI" id="CHEBI:83144"/>
        <dbReference type="ChEBI" id="CHEBI:83145"/>
        <dbReference type="EC" id="2.1.3.15"/>
    </reaction>
</comment>
<comment type="cofactor">
    <cofactor evidence="2">
        <name>Zn(2+)</name>
        <dbReference type="ChEBI" id="CHEBI:29105"/>
    </cofactor>
    <text evidence="2">Binds 1 zinc ion per subunit.</text>
</comment>
<comment type="pathway">
    <text evidence="2">Lipid metabolism; malonyl-CoA biosynthesis; malonyl-CoA from acetyl-CoA: step 1/1.</text>
</comment>
<comment type="subunit">
    <text evidence="1">Acetyl-CoA carboxylase is a heterohexamer composed of biotin carboxyl carrier protein, biotin carboxylase and 2 subunits each of ACCase subunit alpha and ACCase plastid-coded subunit beta (accD).</text>
</comment>
<comment type="subcellular location">
    <subcellularLocation>
        <location evidence="2">Plastid</location>
        <location evidence="2">Chloroplast stroma</location>
    </subcellularLocation>
</comment>
<comment type="similarity">
    <text evidence="2">Belongs to the AccD/PCCB family.</text>
</comment>
<evidence type="ECO:0000250" key="1"/>
<evidence type="ECO:0000255" key="2">
    <source>
        <dbReference type="HAMAP-Rule" id="MF_01395"/>
    </source>
</evidence>
<evidence type="ECO:0000255" key="3">
    <source>
        <dbReference type="PROSITE-ProRule" id="PRU01136"/>
    </source>
</evidence>
<geneLocation type="chloroplast"/>
<sequence>MEKWWLNSMLSNEDLGRRCGLSASLGPIGNTSGSEEPITNDNEKNIHSWSGRGSYSYSNVDYLLGLDGVKDIWSLISGDTFWVRDSNGDSYSVYFDIENKIFEIDTDSYFLGELESLFSSYLNLNSGSKDYNRYYDQYVYDTRHSWKNHINSCIDSYIRSETNMDSCISNGSNNSSDNYIYSYICSDSERGSDRGSSNLKTSVSDFGRHSDLDRNLKYGHLWVQCENCYGLNYKKFFSSKMNICEQCGYHLKMSSSDRIELLIDPGTWDPMDENMVSIDPIEFHSEEEPYRDRINSYQIETGLAEAVQTGIGKLNGIPIAIGVMDFKFMGGSMGSVVGEKITRLIEYATDRSLPVIMVCASGGARMQEGSLSLMQMAKISSALYNYQSNKKLFYVSILTSPTTGGVTASFGMLGDIIIAEPNAYIAFAGKRVIEQTLKKTVPEGSQVAEYSFHKGLFDPIVPRNLLKGVPSELFQFHGFFPRP</sequence>
<proteinExistence type="inferred from homology"/>
<gene>
    <name evidence="2" type="primary">accD</name>
</gene>
<accession>A1XFW4</accession>
<dbReference type="EC" id="2.1.3.15" evidence="2"/>
<dbReference type="EMBL" id="DQ354691">
    <property type="protein sequence ID" value="ABC60467.1"/>
    <property type="molecule type" value="Genomic_DNA"/>
</dbReference>
<dbReference type="RefSeq" id="YP_001001543.1">
    <property type="nucleotide sequence ID" value="NC_008788.1"/>
</dbReference>
<dbReference type="SMR" id="A1XFW4"/>
<dbReference type="GeneID" id="4699551"/>
<dbReference type="UniPathway" id="UPA00655">
    <property type="reaction ID" value="UER00711"/>
</dbReference>
<dbReference type="GO" id="GO:0009317">
    <property type="term" value="C:acetyl-CoA carboxylase complex"/>
    <property type="evidence" value="ECO:0007669"/>
    <property type="project" value="InterPro"/>
</dbReference>
<dbReference type="GO" id="GO:0009570">
    <property type="term" value="C:chloroplast stroma"/>
    <property type="evidence" value="ECO:0007669"/>
    <property type="project" value="UniProtKB-SubCell"/>
</dbReference>
<dbReference type="GO" id="GO:0003989">
    <property type="term" value="F:acetyl-CoA carboxylase activity"/>
    <property type="evidence" value="ECO:0007669"/>
    <property type="project" value="InterPro"/>
</dbReference>
<dbReference type="GO" id="GO:0005524">
    <property type="term" value="F:ATP binding"/>
    <property type="evidence" value="ECO:0007669"/>
    <property type="project" value="UniProtKB-KW"/>
</dbReference>
<dbReference type="GO" id="GO:0016743">
    <property type="term" value="F:carboxyl- or carbamoyltransferase activity"/>
    <property type="evidence" value="ECO:0007669"/>
    <property type="project" value="UniProtKB-UniRule"/>
</dbReference>
<dbReference type="GO" id="GO:0008270">
    <property type="term" value="F:zinc ion binding"/>
    <property type="evidence" value="ECO:0007669"/>
    <property type="project" value="UniProtKB-UniRule"/>
</dbReference>
<dbReference type="GO" id="GO:0006633">
    <property type="term" value="P:fatty acid biosynthetic process"/>
    <property type="evidence" value="ECO:0007669"/>
    <property type="project" value="UniProtKB-KW"/>
</dbReference>
<dbReference type="GO" id="GO:2001295">
    <property type="term" value="P:malonyl-CoA biosynthetic process"/>
    <property type="evidence" value="ECO:0007669"/>
    <property type="project" value="UniProtKB-UniRule"/>
</dbReference>
<dbReference type="Gene3D" id="3.90.226.10">
    <property type="entry name" value="2-enoyl-CoA Hydratase, Chain A, domain 1"/>
    <property type="match status" value="1"/>
</dbReference>
<dbReference type="HAMAP" id="MF_01395">
    <property type="entry name" value="AcetylCoA_CT_beta"/>
    <property type="match status" value="1"/>
</dbReference>
<dbReference type="InterPro" id="IPR034733">
    <property type="entry name" value="AcCoA_carboxyl_beta"/>
</dbReference>
<dbReference type="InterPro" id="IPR000438">
    <property type="entry name" value="Acetyl_CoA_COase_Trfase_b_su"/>
</dbReference>
<dbReference type="InterPro" id="IPR029045">
    <property type="entry name" value="ClpP/crotonase-like_dom_sf"/>
</dbReference>
<dbReference type="InterPro" id="IPR011762">
    <property type="entry name" value="COA_CT_N"/>
</dbReference>
<dbReference type="NCBIfam" id="TIGR00515">
    <property type="entry name" value="accD"/>
    <property type="match status" value="1"/>
</dbReference>
<dbReference type="PANTHER" id="PTHR42995">
    <property type="entry name" value="ACETYL-COENZYME A CARBOXYLASE CARBOXYL TRANSFERASE SUBUNIT BETA, CHLOROPLASTIC"/>
    <property type="match status" value="1"/>
</dbReference>
<dbReference type="PANTHER" id="PTHR42995:SF5">
    <property type="entry name" value="ACETYL-COENZYME A CARBOXYLASE CARBOXYL TRANSFERASE SUBUNIT BETA, CHLOROPLASTIC"/>
    <property type="match status" value="1"/>
</dbReference>
<dbReference type="Pfam" id="PF01039">
    <property type="entry name" value="Carboxyl_trans"/>
    <property type="match status" value="1"/>
</dbReference>
<dbReference type="PRINTS" id="PR01070">
    <property type="entry name" value="ACCCTRFRASEB"/>
</dbReference>
<dbReference type="SUPFAM" id="SSF52096">
    <property type="entry name" value="ClpP/crotonase"/>
    <property type="match status" value="1"/>
</dbReference>
<dbReference type="PROSITE" id="PS50980">
    <property type="entry name" value="COA_CT_NTER"/>
    <property type="match status" value="1"/>
</dbReference>
<feature type="chain" id="PRO_0000359156" description="Acetyl-coenzyme A carboxylase carboxyl transferase subunit beta, chloroplastic">
    <location>
        <begin position="1"/>
        <end position="483"/>
    </location>
</feature>
<feature type="domain" description="CoA carboxyltransferase N-terminal" evidence="3">
    <location>
        <begin position="221"/>
        <end position="483"/>
    </location>
</feature>
<feature type="zinc finger region" description="C4-type" evidence="2">
    <location>
        <begin position="225"/>
        <end position="247"/>
    </location>
</feature>
<feature type="binding site" evidence="2">
    <location>
        <position position="225"/>
    </location>
    <ligand>
        <name>Zn(2+)</name>
        <dbReference type="ChEBI" id="CHEBI:29105"/>
    </ligand>
</feature>
<feature type="binding site" evidence="2">
    <location>
        <position position="228"/>
    </location>
    <ligand>
        <name>Zn(2+)</name>
        <dbReference type="ChEBI" id="CHEBI:29105"/>
    </ligand>
</feature>
<feature type="binding site" evidence="2">
    <location>
        <position position="244"/>
    </location>
    <ligand>
        <name>Zn(2+)</name>
        <dbReference type="ChEBI" id="CHEBI:29105"/>
    </ligand>
</feature>
<feature type="binding site" evidence="2">
    <location>
        <position position="247"/>
    </location>
    <ligand>
        <name>Zn(2+)</name>
        <dbReference type="ChEBI" id="CHEBI:29105"/>
    </ligand>
</feature>